<protein>
    <recommendedName>
        <fullName evidence="1">Chaperone protein DnaK</fullName>
    </recommendedName>
    <alternativeName>
        <fullName evidence="1">HSP70</fullName>
    </alternativeName>
    <alternativeName>
        <fullName evidence="1">Heat shock 70 kDa protein</fullName>
    </alternativeName>
    <alternativeName>
        <fullName evidence="1">Heat shock protein 70</fullName>
    </alternativeName>
</protein>
<proteinExistence type="inferred from homology"/>
<reference key="1">
    <citation type="journal article" date="2009" name="Nat. Genet.">
        <title>Comparative genomic and phylogeographic analysis of Mycobacterium leprae.</title>
        <authorList>
            <person name="Monot M."/>
            <person name="Honore N."/>
            <person name="Garnier T."/>
            <person name="Zidane N."/>
            <person name="Sherafi D."/>
            <person name="Paniz-Mondolfi A."/>
            <person name="Matsuoka M."/>
            <person name="Taylor G.M."/>
            <person name="Donoghue H.D."/>
            <person name="Bouwman A."/>
            <person name="Mays S."/>
            <person name="Watson C."/>
            <person name="Lockwood D."/>
            <person name="Khamispour A."/>
            <person name="Dowlati Y."/>
            <person name="Jianping S."/>
            <person name="Rea T.H."/>
            <person name="Vera-Cabrera L."/>
            <person name="Stefani M.M."/>
            <person name="Banu S."/>
            <person name="Macdonald M."/>
            <person name="Sapkota B.R."/>
            <person name="Spencer J.S."/>
            <person name="Thomas J."/>
            <person name="Harshman K."/>
            <person name="Singh P."/>
            <person name="Busso P."/>
            <person name="Gattiker A."/>
            <person name="Rougemont J."/>
            <person name="Brennan P.J."/>
            <person name="Cole S.T."/>
        </authorList>
    </citation>
    <scope>NUCLEOTIDE SEQUENCE [LARGE SCALE GENOMIC DNA]</scope>
    <source>
        <strain>Br4923</strain>
    </source>
</reference>
<organism>
    <name type="scientific">Mycobacterium leprae (strain Br4923)</name>
    <dbReference type="NCBI Taxonomy" id="561304"/>
    <lineage>
        <taxon>Bacteria</taxon>
        <taxon>Bacillati</taxon>
        <taxon>Actinomycetota</taxon>
        <taxon>Actinomycetes</taxon>
        <taxon>Mycobacteriales</taxon>
        <taxon>Mycobacteriaceae</taxon>
        <taxon>Mycobacterium</taxon>
    </lineage>
</organism>
<sequence>MARAVGIDLGTTNSVVSVLEGGDPVVVANSEGSRTTPSTVAFARNGEVLVGQPAKNQAVTNVDRTIRSVKRHMGSDWSIEIDGKKYTAQEISARVLMKLKRDAEAYLGEDITDAVITTPAYFNDAQRQATKEAGQIAGLNVLRIVNEPTAAALAYGLDKGEREQTILVFDLGGGTFDVSLLEIGEGVVEVRATSGDNHLGGDDWDDRIVNWLVDKFKGTSGIDLTKDKMAMQRLREAAEKAKIELSSSQSTSVNLPYITVDSDKNPLFLDEQLIRAEFQRITQDLLDRTRQPFQSVVKDAGISVSEIDHVVLVGGSTRMPAVTDLVKELTGGKEPNKGVNPDEVVAVGAALQAGVLKGEVKDVLLLDVTPLSLGIETKGGVMTKLIERNTTIPTKRSETFTTADDNQPSVQIQVYQGEREIASHNKLLGSFELTGIPPAPRGVPQIEVTFDIDANGIVHVTAKDKGTGKENTIKIQEGSGLSKEEIDRMVKDAEAHAEEDRKRREEADVRNQAETLVYQTEKFVKEQRETENGSRVPEDTLNKVEAAVAEAKTALGGTDISAIKSAMEKLGQDSQALGQAIYEATQAASKVGGEASAPGGSNSTDDVVDAEVVDDERESK</sequence>
<keyword id="KW-0067">ATP-binding</keyword>
<keyword id="KW-0143">Chaperone</keyword>
<keyword id="KW-0547">Nucleotide-binding</keyword>
<keyword id="KW-0597">Phosphoprotein</keyword>
<keyword id="KW-0346">Stress response</keyword>
<name>DNAK_MYCLB</name>
<dbReference type="EMBL" id="FM211192">
    <property type="protein sequence ID" value="CAR72595.1"/>
    <property type="molecule type" value="Genomic_DNA"/>
</dbReference>
<dbReference type="SMR" id="B8ZTB7"/>
<dbReference type="KEGG" id="mlb:MLBr02496"/>
<dbReference type="HOGENOM" id="CLU_005965_2_1_11"/>
<dbReference type="Proteomes" id="UP000006900">
    <property type="component" value="Chromosome"/>
</dbReference>
<dbReference type="GO" id="GO:0005524">
    <property type="term" value="F:ATP binding"/>
    <property type="evidence" value="ECO:0007669"/>
    <property type="project" value="UniProtKB-UniRule"/>
</dbReference>
<dbReference type="GO" id="GO:0140662">
    <property type="term" value="F:ATP-dependent protein folding chaperone"/>
    <property type="evidence" value="ECO:0007669"/>
    <property type="project" value="InterPro"/>
</dbReference>
<dbReference type="GO" id="GO:0051082">
    <property type="term" value="F:unfolded protein binding"/>
    <property type="evidence" value="ECO:0007669"/>
    <property type="project" value="InterPro"/>
</dbReference>
<dbReference type="CDD" id="cd10234">
    <property type="entry name" value="ASKHA_NBD_HSP70_DnaK-like"/>
    <property type="match status" value="1"/>
</dbReference>
<dbReference type="FunFam" id="2.60.34.10:FF:000014">
    <property type="entry name" value="Chaperone protein DnaK HSP70"/>
    <property type="match status" value="1"/>
</dbReference>
<dbReference type="FunFam" id="1.20.1270.10:FF:000001">
    <property type="entry name" value="Molecular chaperone DnaK"/>
    <property type="match status" value="1"/>
</dbReference>
<dbReference type="FunFam" id="3.30.420.40:FF:000071">
    <property type="entry name" value="Molecular chaperone DnaK"/>
    <property type="match status" value="1"/>
</dbReference>
<dbReference type="FunFam" id="3.90.640.10:FF:000003">
    <property type="entry name" value="Molecular chaperone DnaK"/>
    <property type="match status" value="1"/>
</dbReference>
<dbReference type="Gene3D" id="1.20.1270.10">
    <property type="match status" value="1"/>
</dbReference>
<dbReference type="Gene3D" id="3.30.30.30">
    <property type="match status" value="1"/>
</dbReference>
<dbReference type="Gene3D" id="3.30.420.40">
    <property type="match status" value="3"/>
</dbReference>
<dbReference type="Gene3D" id="3.90.640.10">
    <property type="entry name" value="Actin, Chain A, domain 4"/>
    <property type="match status" value="1"/>
</dbReference>
<dbReference type="Gene3D" id="2.60.34.10">
    <property type="entry name" value="Substrate Binding Domain Of DNAk, Chain A, domain 1"/>
    <property type="match status" value="1"/>
</dbReference>
<dbReference type="HAMAP" id="MF_00332">
    <property type="entry name" value="DnaK"/>
    <property type="match status" value="1"/>
</dbReference>
<dbReference type="InterPro" id="IPR043129">
    <property type="entry name" value="ATPase_NBD"/>
</dbReference>
<dbReference type="InterPro" id="IPR012725">
    <property type="entry name" value="Chaperone_DnaK"/>
</dbReference>
<dbReference type="InterPro" id="IPR018181">
    <property type="entry name" value="Heat_shock_70_CS"/>
</dbReference>
<dbReference type="InterPro" id="IPR029048">
    <property type="entry name" value="HSP70_C_sf"/>
</dbReference>
<dbReference type="InterPro" id="IPR029047">
    <property type="entry name" value="HSP70_peptide-bd_sf"/>
</dbReference>
<dbReference type="InterPro" id="IPR013126">
    <property type="entry name" value="Hsp_70_fam"/>
</dbReference>
<dbReference type="NCBIfam" id="NF001413">
    <property type="entry name" value="PRK00290.1"/>
    <property type="match status" value="1"/>
</dbReference>
<dbReference type="NCBIfam" id="TIGR02350">
    <property type="entry name" value="prok_dnaK"/>
    <property type="match status" value="1"/>
</dbReference>
<dbReference type="PANTHER" id="PTHR19375">
    <property type="entry name" value="HEAT SHOCK PROTEIN 70KDA"/>
    <property type="match status" value="1"/>
</dbReference>
<dbReference type="Pfam" id="PF00012">
    <property type="entry name" value="HSP70"/>
    <property type="match status" value="1"/>
</dbReference>
<dbReference type="PRINTS" id="PR00301">
    <property type="entry name" value="HEATSHOCK70"/>
</dbReference>
<dbReference type="SUPFAM" id="SSF53067">
    <property type="entry name" value="Actin-like ATPase domain"/>
    <property type="match status" value="2"/>
</dbReference>
<dbReference type="SUPFAM" id="SSF100934">
    <property type="entry name" value="Heat shock protein 70kD (HSP70), C-terminal subdomain"/>
    <property type="match status" value="1"/>
</dbReference>
<dbReference type="SUPFAM" id="SSF100920">
    <property type="entry name" value="Heat shock protein 70kD (HSP70), peptide-binding domain"/>
    <property type="match status" value="1"/>
</dbReference>
<dbReference type="PROSITE" id="PS00297">
    <property type="entry name" value="HSP70_1"/>
    <property type="match status" value="1"/>
</dbReference>
<dbReference type="PROSITE" id="PS00329">
    <property type="entry name" value="HSP70_2"/>
    <property type="match status" value="1"/>
</dbReference>
<dbReference type="PROSITE" id="PS01036">
    <property type="entry name" value="HSP70_3"/>
    <property type="match status" value="1"/>
</dbReference>
<comment type="function">
    <text evidence="1">Acts as a chaperone.</text>
</comment>
<comment type="induction">
    <text evidence="1">By stress conditions e.g. heat shock.</text>
</comment>
<comment type="similarity">
    <text evidence="1">Belongs to the heat shock protein 70 family.</text>
</comment>
<feature type="chain" id="PRO_1000133156" description="Chaperone protein DnaK">
    <location>
        <begin position="1"/>
        <end position="620"/>
    </location>
</feature>
<feature type="region of interest" description="Disordered" evidence="2">
    <location>
        <begin position="588"/>
        <end position="620"/>
    </location>
</feature>
<feature type="compositionally biased region" description="Acidic residues" evidence="2">
    <location>
        <begin position="606"/>
        <end position="620"/>
    </location>
</feature>
<feature type="modified residue" description="Phosphothreonine; by autocatalysis" evidence="1">
    <location>
        <position position="175"/>
    </location>
</feature>
<evidence type="ECO:0000255" key="1">
    <source>
        <dbReference type="HAMAP-Rule" id="MF_00332"/>
    </source>
</evidence>
<evidence type="ECO:0000256" key="2">
    <source>
        <dbReference type="SAM" id="MobiDB-lite"/>
    </source>
</evidence>
<gene>
    <name evidence="1" type="primary">dnaK</name>
    <name type="ordered locus">MLBr02496</name>
</gene>
<accession>B8ZTB7</accession>